<protein>
    <recommendedName>
        <fullName>TBC1 domain family member 23</fullName>
    </recommendedName>
</protein>
<evidence type="ECO:0000250" key="1">
    <source>
        <dbReference type="UniProtKB" id="Q8K0F1"/>
    </source>
</evidence>
<evidence type="ECO:0000250" key="2">
    <source>
        <dbReference type="UniProtKB" id="Q9NUY8"/>
    </source>
</evidence>
<evidence type="ECO:0000255" key="3">
    <source>
        <dbReference type="PROSITE-ProRule" id="PRU00163"/>
    </source>
</evidence>
<evidence type="ECO:0000255" key="4">
    <source>
        <dbReference type="PROSITE-ProRule" id="PRU00173"/>
    </source>
</evidence>
<evidence type="ECO:0000256" key="5">
    <source>
        <dbReference type="SAM" id="MobiDB-lite"/>
    </source>
</evidence>
<evidence type="ECO:0000303" key="6">
    <source ref="1"/>
</evidence>
<evidence type="ECO:0000305" key="7"/>
<name>TBC23_PONAB</name>
<organism>
    <name type="scientific">Pongo abelii</name>
    <name type="common">Sumatran orangutan</name>
    <name type="synonym">Pongo pygmaeus abelii</name>
    <dbReference type="NCBI Taxonomy" id="9601"/>
    <lineage>
        <taxon>Eukaryota</taxon>
        <taxon>Metazoa</taxon>
        <taxon>Chordata</taxon>
        <taxon>Craniata</taxon>
        <taxon>Vertebrata</taxon>
        <taxon>Euteleostomi</taxon>
        <taxon>Mammalia</taxon>
        <taxon>Eutheria</taxon>
        <taxon>Euarchontoglires</taxon>
        <taxon>Primates</taxon>
        <taxon>Haplorrhini</taxon>
        <taxon>Catarrhini</taxon>
        <taxon>Hominidae</taxon>
        <taxon>Pongo</taxon>
    </lineage>
</organism>
<gene>
    <name type="primary">TBC1D23</name>
</gene>
<feature type="chain" id="PRO_0000287499" description="TBC1 domain family member 23">
    <location>
        <begin position="1"/>
        <end position="684"/>
    </location>
</feature>
<feature type="domain" description="Rab-GAP TBC" evidence="3">
    <location>
        <begin position="44"/>
        <end position="225"/>
    </location>
</feature>
<feature type="domain" description="Rhodanese" evidence="4">
    <location>
        <begin position="334"/>
        <end position="446"/>
    </location>
</feature>
<feature type="region of interest" description="Disordered" evidence="5">
    <location>
        <begin position="459"/>
        <end position="482"/>
    </location>
</feature>
<feature type="region of interest" description="May mediate the interaction with WASHC1" evidence="1">
    <location>
        <begin position="514"/>
        <end position="684"/>
    </location>
</feature>
<feature type="region of interest" description="May mediate the interaction with C17orf75, FAM91A1 and WDR11" evidence="1">
    <location>
        <begin position="514"/>
        <end position="558"/>
    </location>
</feature>
<feature type="region of interest" description="May mediate the interaction with FKBP15 and WASHC2; required for endosome to Golgi trafficking" evidence="1">
    <location>
        <begin position="559"/>
        <end position="684"/>
    </location>
</feature>
<feature type="compositionally biased region" description="Polar residues" evidence="5">
    <location>
        <begin position="459"/>
        <end position="479"/>
    </location>
</feature>
<feature type="modified residue" description="Phosphoserine" evidence="2">
    <location>
        <position position="300"/>
    </location>
</feature>
<feature type="modified residue" description="Phosphoserine" evidence="1">
    <location>
        <position position="469"/>
    </location>
</feature>
<feature type="modified residue" description="Phosphoserine" evidence="2">
    <location>
        <position position="474"/>
    </location>
</feature>
<feature type="modified residue" description="Phosphoserine" evidence="2">
    <location>
        <position position="507"/>
    </location>
</feature>
<feature type="modified residue" description="Phosphothreonine" evidence="2">
    <location>
        <position position="514"/>
    </location>
</feature>
<feature type="modified residue" description="Phosphoserine" evidence="2">
    <location>
        <position position="556"/>
    </location>
</feature>
<feature type="splice variant" id="VSP_025522" description="In isoform 2." evidence="6">
    <location>
        <begin position="1"/>
        <end position="152"/>
    </location>
</feature>
<feature type="sequence conflict" description="In Ref. 1; CAH91797." evidence="7" ref="1">
    <original>W</original>
    <variation>R</variation>
    <location>
        <position position="502"/>
    </location>
</feature>
<feature type="sequence conflict" description="In Ref. 1; CAH91797." evidence="7" ref="1">
    <original>D</original>
    <variation>H</variation>
    <location>
        <position position="546"/>
    </location>
</feature>
<accession>Q5R8I6</accession>
<accession>Q5R8W3</accession>
<keyword id="KW-0025">Alternative splicing</keyword>
<keyword id="KW-0968">Cytoplasmic vesicle</keyword>
<keyword id="KW-0217">Developmental protein</keyword>
<keyword id="KW-0333">Golgi apparatus</keyword>
<keyword id="KW-0597">Phosphoprotein</keyword>
<keyword id="KW-1185">Reference proteome</keyword>
<comment type="function">
    <text evidence="1 2">Putative Rab GTPase-activating protein which plays a role in vesicular trafficking. Involved in endosome-to-Golgi trafficking. Acts as a bridging protein by binding simultaneously to golgins, including GOLGA1 and GOLGA4, located at the trans-Golgi, and to the WASH complex, located on endosome-derived vesicles. Together with WDR11 complex facilitates the golgin-mediated capture of vesicles generated using AP-1 (By similarity). Plays a role in brain development, including in cortical neuron positioning (By similarity). May also be important for neurite outgrowth, possibly through its involvement in membrane trafficking and cargo delivery, 2 processes that are essential for axonal and dendritic growth (By similarity). May act as a general inhibitor of innate immunity signaling, strongly inhibiting multiple TLR and dectin/CLEC7A-signaling pathways. Does not alter initial activation events, but instead affects maintenance of inflammatory gene expression several hours after bacterial lipopolysaccharide (LPS) challenge (By similarity).</text>
</comment>
<comment type="subunit">
    <text evidence="2">Directly interacts with GOLGA1 and GOLGA4. Interacts with FAM91A1, C17ORF75 and WDR11; the interaction recruits TBC1D23 to AP-1-derived vesicles. Directly interacts with WASHC1 and WASHC2A/FAM21A. Interacts with FKBP15.</text>
</comment>
<comment type="subcellular location">
    <subcellularLocation>
        <location evidence="2">Golgi apparatus</location>
        <location evidence="2">trans-Golgi network</location>
    </subcellularLocation>
    <subcellularLocation>
        <location evidence="2">Cytoplasmic vesicle</location>
    </subcellularLocation>
    <text evidence="2">Localization to the trans-Golgi is regulated by ARL1 and ARL5B/ARL8. ARL1 increases Golgi localization, while ARL5B decreases it. Recruitment to the trans-Golgi network requires the presence of GOLGA1 and GOLGA4, but not that of FAM91A1. Recruited on AP-1-derived vesicles by WDR11 complex.</text>
</comment>
<comment type="alternative products">
    <event type="alternative splicing"/>
    <isoform>
        <id>Q5R8I6-1</id>
        <name>1</name>
        <sequence type="displayed"/>
    </isoform>
    <isoform>
        <id>Q5R8I6-2</id>
        <name>2</name>
        <sequence type="described" ref="VSP_025522"/>
    </isoform>
</comment>
<comment type="sequence caution" evidence="7">
    <conflict type="frameshift">
        <sequence resource="EMBL-CDS" id="CAH91797"/>
    </conflict>
</comment>
<proteinExistence type="evidence at transcript level"/>
<dbReference type="EMBL" id="CR859635">
    <property type="protein sequence ID" value="CAH91797.1"/>
    <property type="status" value="ALT_FRAME"/>
    <property type="molecule type" value="mRNA"/>
</dbReference>
<dbReference type="EMBL" id="CR859766">
    <property type="protein sequence ID" value="CAH91924.1"/>
    <property type="molecule type" value="mRNA"/>
</dbReference>
<dbReference type="RefSeq" id="NP_001128947.1">
    <molecule id="Q5R8I6-1"/>
    <property type="nucleotide sequence ID" value="NM_001135475.1"/>
</dbReference>
<dbReference type="SMR" id="Q5R8I6"/>
<dbReference type="STRING" id="9601.ENSPPYP00000015209"/>
<dbReference type="GeneID" id="100189910"/>
<dbReference type="KEGG" id="pon:100189910"/>
<dbReference type="CTD" id="55773"/>
<dbReference type="eggNOG" id="KOG3636">
    <property type="taxonomic scope" value="Eukaryota"/>
</dbReference>
<dbReference type="InParanoid" id="Q5R8I6"/>
<dbReference type="OrthoDB" id="73307at2759"/>
<dbReference type="Proteomes" id="UP000001595">
    <property type="component" value="Unplaced"/>
</dbReference>
<dbReference type="GO" id="GO:0031410">
    <property type="term" value="C:cytoplasmic vesicle"/>
    <property type="evidence" value="ECO:0000250"/>
    <property type="project" value="UniProtKB"/>
</dbReference>
<dbReference type="GO" id="GO:0005829">
    <property type="term" value="C:cytosol"/>
    <property type="evidence" value="ECO:0007669"/>
    <property type="project" value="GOC"/>
</dbReference>
<dbReference type="GO" id="GO:0005802">
    <property type="term" value="C:trans-Golgi network"/>
    <property type="evidence" value="ECO:0000250"/>
    <property type="project" value="UniProtKB"/>
</dbReference>
<dbReference type="GO" id="GO:0007420">
    <property type="term" value="P:brain development"/>
    <property type="evidence" value="ECO:0000250"/>
    <property type="project" value="UniProtKB"/>
</dbReference>
<dbReference type="GO" id="GO:1990403">
    <property type="term" value="P:embryonic brain development"/>
    <property type="evidence" value="ECO:0000250"/>
    <property type="project" value="UniProtKB"/>
</dbReference>
<dbReference type="GO" id="GO:0031175">
    <property type="term" value="P:neuron projection development"/>
    <property type="evidence" value="ECO:0000250"/>
    <property type="project" value="UniProtKB"/>
</dbReference>
<dbReference type="GO" id="GO:0042147">
    <property type="term" value="P:retrograde transport, endosome to Golgi"/>
    <property type="evidence" value="ECO:0007669"/>
    <property type="project" value="InterPro"/>
</dbReference>
<dbReference type="GO" id="GO:0099041">
    <property type="term" value="P:vesicle tethering to Golgi"/>
    <property type="evidence" value="ECO:0000250"/>
    <property type="project" value="UniProtKB"/>
</dbReference>
<dbReference type="GO" id="GO:0016192">
    <property type="term" value="P:vesicle-mediated transport"/>
    <property type="evidence" value="ECO:0000250"/>
    <property type="project" value="UniProtKB"/>
</dbReference>
<dbReference type="CDD" id="cd20788">
    <property type="entry name" value="TBC1D23_C-like"/>
    <property type="match status" value="1"/>
</dbReference>
<dbReference type="FunFam" id="1.10.472.80:FF:000017">
    <property type="entry name" value="TBC1 domain family member 23"/>
    <property type="match status" value="1"/>
</dbReference>
<dbReference type="FunFam" id="3.40.250.10:FF:000002">
    <property type="entry name" value="TBC1 domain family member 23"/>
    <property type="match status" value="1"/>
</dbReference>
<dbReference type="Gene3D" id="3.40.250.10">
    <property type="entry name" value="Rhodanese-like domain"/>
    <property type="match status" value="1"/>
</dbReference>
<dbReference type="Gene3D" id="1.10.472.80">
    <property type="entry name" value="Ypt/Rab-GAP domain of gyp1p, domain 3"/>
    <property type="match status" value="1"/>
</dbReference>
<dbReference type="InterPro" id="IPR000195">
    <property type="entry name" value="Rab-GAP-TBC_dom"/>
</dbReference>
<dbReference type="InterPro" id="IPR035969">
    <property type="entry name" value="Rab-GAP_TBC_sf"/>
</dbReference>
<dbReference type="InterPro" id="IPR001763">
    <property type="entry name" value="Rhodanese-like_dom"/>
</dbReference>
<dbReference type="InterPro" id="IPR036873">
    <property type="entry name" value="Rhodanese-like_dom_sf"/>
</dbReference>
<dbReference type="InterPro" id="IPR039755">
    <property type="entry name" value="TBC1D23"/>
</dbReference>
<dbReference type="InterPro" id="IPR045799">
    <property type="entry name" value="TBC1D23_C"/>
</dbReference>
<dbReference type="PANTHER" id="PTHR13297:SF5">
    <property type="entry name" value="TBC1 DOMAIN FAMILY MEMBER 23"/>
    <property type="match status" value="1"/>
</dbReference>
<dbReference type="PANTHER" id="PTHR13297">
    <property type="entry name" value="TBC1 DOMAIN FAMILY MEMBER 23-RELATED"/>
    <property type="match status" value="1"/>
</dbReference>
<dbReference type="Pfam" id="PF00566">
    <property type="entry name" value="RabGAP-TBC"/>
    <property type="match status" value="1"/>
</dbReference>
<dbReference type="Pfam" id="PF00581">
    <property type="entry name" value="Rhodanese"/>
    <property type="match status" value="1"/>
</dbReference>
<dbReference type="Pfam" id="PF19430">
    <property type="entry name" value="TBC1D23_C"/>
    <property type="match status" value="1"/>
</dbReference>
<dbReference type="SMART" id="SM00164">
    <property type="entry name" value="TBC"/>
    <property type="match status" value="1"/>
</dbReference>
<dbReference type="SUPFAM" id="SSF52821">
    <property type="entry name" value="Rhodanese/Cell cycle control phosphatase"/>
    <property type="match status" value="1"/>
</dbReference>
<dbReference type="SUPFAM" id="SSF47923">
    <property type="entry name" value="Ypt/Rab-GAP domain of gyp1p"/>
    <property type="match status" value="2"/>
</dbReference>
<dbReference type="PROSITE" id="PS50206">
    <property type="entry name" value="RHODANESE_3"/>
    <property type="match status" value="1"/>
</dbReference>
<dbReference type="PROSITE" id="PS50086">
    <property type="entry name" value="TBC_RABGAP"/>
    <property type="match status" value="1"/>
</dbReference>
<reference key="1">
    <citation type="submission" date="2004-11" db="EMBL/GenBank/DDBJ databases">
        <authorList>
            <consortium name="The German cDNA consortium"/>
        </authorList>
    </citation>
    <scope>NUCLEOTIDE SEQUENCE [LARGE SCALE MRNA] (ISOFORMS 1 AND 2)</scope>
    <source>
        <tissue>Kidney</tissue>
    </source>
</reference>
<sequence length="684" mass="76559">MAEGEDVLPLPTSSGDGWEKDLEEALEAGGCDLETLRNIIQGRPLPADLRAKVWKIALNVAGKGDSLASWDGILDLPEQNTIHKDCLQFIDQLSVPEEKAAELLLDIESVITFYCKSRNIKYSTSLSWIHLLKPLVHLQLPRSDLYNCFYAIMNKYIPRDCSQKGRPFHLFRLLIQYHEPELCSYLDTKKITPDSYALNWLGSLFACYCSIEVTQAIWDGYLQQADPFFIYFLMLIILVNAKEVILTQESDSKEEVIQFLENTPSSLNIEDIEDLFSLAQYYCSKTPASFRKDNHHLFGSTLLGIKDDDADLSQALCLAISVSEILQANQLQGEGVRFFVVDCRPAEQYNAGHLSTAFHLDSDLMLQNPSEFAQSVKSLLEAQKQSIESGSIAGGEHLCFMGSGREEEDMYMNMVLAHFLQKNKEYVSIASGGFMALQQHLADINVDGPENGYGHWIASTSGSRSSINSVDGESPNGSSDRGMKSLVNKMTVALKTKSVNVWEKVISFIENTSTPVDRHVSSSDRVGKPYRGVKPVFSIGDEEEYDTDEIDSSSMSDDDRKEVVNIQTWINKPDVKHHFPCKEVKESGHMFPSHLLVTATHMYCLREIVSRKGLAYIQSRQALNSVVKITSKKKHPELITFKYGNSSASGIEILAIERYLIPNAGDATKAIKQQIMKVLDALES</sequence>